<comment type="function">
    <text evidence="1">Involved in the modulation of the specificity of the ClpAP-mediated ATP-dependent protein degradation.</text>
</comment>
<comment type="subunit">
    <text evidence="1">Binds to the N-terminal domain of the chaperone ClpA.</text>
</comment>
<comment type="similarity">
    <text evidence="1">Belongs to the ClpS family.</text>
</comment>
<proteinExistence type="inferred from homology"/>
<keyword id="KW-1185">Reference proteome</keyword>
<evidence type="ECO:0000255" key="1">
    <source>
        <dbReference type="HAMAP-Rule" id="MF_00302"/>
    </source>
</evidence>
<accession>Q5ZXB5</accession>
<organism>
    <name type="scientific">Legionella pneumophila subsp. pneumophila (strain Philadelphia 1 / ATCC 33152 / DSM 7513)</name>
    <dbReference type="NCBI Taxonomy" id="272624"/>
    <lineage>
        <taxon>Bacteria</taxon>
        <taxon>Pseudomonadati</taxon>
        <taxon>Pseudomonadota</taxon>
        <taxon>Gammaproteobacteria</taxon>
        <taxon>Legionellales</taxon>
        <taxon>Legionellaceae</taxon>
        <taxon>Legionella</taxon>
    </lineage>
</organism>
<sequence>MSKQNLEEIIQTGIADTELSTEISTAIKRPRKYKVLLLNDDYTPMDFVVEVLKHFFHLNEEVAIQVMLQVHFQGKGVCGVFTRDIAETKVALVNEYARMNQHPLLSSMEPE</sequence>
<feature type="chain" id="PRO_0000215718" description="ATP-dependent Clp protease adapter protein ClpS">
    <location>
        <begin position="1"/>
        <end position="111"/>
    </location>
</feature>
<dbReference type="EMBL" id="AE017354">
    <property type="protein sequence ID" value="AAU26905.1"/>
    <property type="molecule type" value="Genomic_DNA"/>
</dbReference>
<dbReference type="RefSeq" id="WP_010946553.1">
    <property type="nucleotide sequence ID" value="NC_002942.5"/>
</dbReference>
<dbReference type="RefSeq" id="YP_094852.1">
    <property type="nucleotide sequence ID" value="NC_002942.5"/>
</dbReference>
<dbReference type="SMR" id="Q5ZXB5"/>
<dbReference type="STRING" id="272624.lpg0817"/>
<dbReference type="PaxDb" id="272624-lpg0817"/>
<dbReference type="GeneID" id="57034805"/>
<dbReference type="KEGG" id="lpn:lpg0817"/>
<dbReference type="PATRIC" id="fig|272624.6.peg.846"/>
<dbReference type="eggNOG" id="COG2127">
    <property type="taxonomic scope" value="Bacteria"/>
</dbReference>
<dbReference type="HOGENOM" id="CLU_134358_2_1_6"/>
<dbReference type="OrthoDB" id="9796121at2"/>
<dbReference type="Proteomes" id="UP000000609">
    <property type="component" value="Chromosome"/>
</dbReference>
<dbReference type="GO" id="GO:0030163">
    <property type="term" value="P:protein catabolic process"/>
    <property type="evidence" value="ECO:0007669"/>
    <property type="project" value="InterPro"/>
</dbReference>
<dbReference type="GO" id="GO:0006508">
    <property type="term" value="P:proteolysis"/>
    <property type="evidence" value="ECO:0007669"/>
    <property type="project" value="UniProtKB-UniRule"/>
</dbReference>
<dbReference type="FunFam" id="3.30.1390.10:FF:000002">
    <property type="entry name" value="ATP-dependent Clp protease adapter protein ClpS"/>
    <property type="match status" value="1"/>
</dbReference>
<dbReference type="Gene3D" id="3.30.1390.10">
    <property type="match status" value="1"/>
</dbReference>
<dbReference type="HAMAP" id="MF_00302">
    <property type="entry name" value="ClpS"/>
    <property type="match status" value="1"/>
</dbReference>
<dbReference type="InterPro" id="IPR022935">
    <property type="entry name" value="ClpS"/>
</dbReference>
<dbReference type="InterPro" id="IPR003769">
    <property type="entry name" value="ClpS_core"/>
</dbReference>
<dbReference type="InterPro" id="IPR014719">
    <property type="entry name" value="Ribosomal_bL12_C/ClpS-like"/>
</dbReference>
<dbReference type="NCBIfam" id="NF000672">
    <property type="entry name" value="PRK00033.1-5"/>
    <property type="match status" value="1"/>
</dbReference>
<dbReference type="PANTHER" id="PTHR33473:SF19">
    <property type="entry name" value="ATP-DEPENDENT CLP PROTEASE ADAPTER PROTEIN CLPS"/>
    <property type="match status" value="1"/>
</dbReference>
<dbReference type="PANTHER" id="PTHR33473">
    <property type="entry name" value="ATP-DEPENDENT CLP PROTEASE ADAPTER PROTEIN CLPS1, CHLOROPLASTIC"/>
    <property type="match status" value="1"/>
</dbReference>
<dbReference type="Pfam" id="PF02617">
    <property type="entry name" value="ClpS"/>
    <property type="match status" value="1"/>
</dbReference>
<dbReference type="SUPFAM" id="SSF54736">
    <property type="entry name" value="ClpS-like"/>
    <property type="match status" value="1"/>
</dbReference>
<protein>
    <recommendedName>
        <fullName evidence="1">ATP-dependent Clp protease adapter protein ClpS</fullName>
    </recommendedName>
</protein>
<name>CLPS_LEGPH</name>
<reference key="1">
    <citation type="journal article" date="2004" name="Science">
        <title>The genomic sequence of the accidental pathogen Legionella pneumophila.</title>
        <authorList>
            <person name="Chien M."/>
            <person name="Morozova I."/>
            <person name="Shi S."/>
            <person name="Sheng H."/>
            <person name="Chen J."/>
            <person name="Gomez S.M."/>
            <person name="Asamani G."/>
            <person name="Hill K."/>
            <person name="Nuara J."/>
            <person name="Feder M."/>
            <person name="Rineer J."/>
            <person name="Greenberg J.J."/>
            <person name="Steshenko V."/>
            <person name="Park S.H."/>
            <person name="Zhao B."/>
            <person name="Teplitskaya E."/>
            <person name="Edwards J.R."/>
            <person name="Pampou S."/>
            <person name="Georghiou A."/>
            <person name="Chou I.-C."/>
            <person name="Iannuccilli W."/>
            <person name="Ulz M.E."/>
            <person name="Kim D.H."/>
            <person name="Geringer-Sameth A."/>
            <person name="Goldsberry C."/>
            <person name="Morozov P."/>
            <person name="Fischer S.G."/>
            <person name="Segal G."/>
            <person name="Qu X."/>
            <person name="Rzhetsky A."/>
            <person name="Zhang P."/>
            <person name="Cayanis E."/>
            <person name="De Jong P.J."/>
            <person name="Ju J."/>
            <person name="Kalachikov S."/>
            <person name="Shuman H.A."/>
            <person name="Russo J.J."/>
        </authorList>
    </citation>
    <scope>NUCLEOTIDE SEQUENCE [LARGE SCALE GENOMIC DNA]</scope>
    <source>
        <strain>Philadelphia 1 / ATCC 33152 / DSM 7513</strain>
    </source>
</reference>
<gene>
    <name evidence="1" type="primary">clpS</name>
    <name type="ordered locus">lpg0817</name>
</gene>